<proteinExistence type="inferred from homology"/>
<sequence length="430" mass="47565">MGYLFTSESVSEGHPDKVADQISDAVLDKLLAYDPSSKVACETLVTTGQVVLAGEVKTKAYVDLQLIAREVIKKIGYTKGEYMFESNSCGVLSAIHEQSPDINRGVERQDPMEQGAGDQGMMFGYATNETENYMPLSLDLAHRILQVLADIRREEKVMTYLRPDAKSQVTIEYDDNGTPVRIDTIVVSTQHDDFIQPADDSAEAQLKADEEMLSIIRRDVIEILMPRVIASIHHDKVLALFNDQIVYHVNPTGKFVIGGPHGDTGLTGRKIIVDTYGGKGAHGGGAFSGKDPSKVDRSAAYAARHIAKNMVAAGVADEMLVQVSYAIGVARPINIFVDTYGRSHVNMTDGEIARVIDQLFDLRPKAIEERLKLRNPIYQETAAYGHMGREPQVVSKTFFSRYEGNKTVEVELFTWEKLDYVDKIKAAFGL</sequence>
<accession>Q8A2T6</accession>
<dbReference type="EC" id="2.5.1.6" evidence="1"/>
<dbReference type="EMBL" id="AE015928">
    <property type="protein sequence ID" value="AAO78325.1"/>
    <property type="molecule type" value="Genomic_DNA"/>
</dbReference>
<dbReference type="RefSeq" id="NP_812131.1">
    <property type="nucleotide sequence ID" value="NC_004663.1"/>
</dbReference>
<dbReference type="RefSeq" id="WP_008762826.1">
    <property type="nucleotide sequence ID" value="NZ_UYXG01000003.1"/>
</dbReference>
<dbReference type="SMR" id="Q8A2T6"/>
<dbReference type="FunCoup" id="Q8A2T6">
    <property type="interactions" value="542"/>
</dbReference>
<dbReference type="STRING" id="226186.BT_3219"/>
<dbReference type="PaxDb" id="226186-BT_3219"/>
<dbReference type="EnsemblBacteria" id="AAO78325">
    <property type="protein sequence ID" value="AAO78325"/>
    <property type="gene ID" value="BT_3219"/>
</dbReference>
<dbReference type="GeneID" id="60924398"/>
<dbReference type="KEGG" id="bth:BT_3219"/>
<dbReference type="PATRIC" id="fig|226186.12.peg.3280"/>
<dbReference type="eggNOG" id="COG0192">
    <property type="taxonomic scope" value="Bacteria"/>
</dbReference>
<dbReference type="HOGENOM" id="CLU_041802_1_1_10"/>
<dbReference type="InParanoid" id="Q8A2T6"/>
<dbReference type="OrthoDB" id="9801686at2"/>
<dbReference type="UniPathway" id="UPA00315">
    <property type="reaction ID" value="UER00080"/>
</dbReference>
<dbReference type="Proteomes" id="UP000001414">
    <property type="component" value="Chromosome"/>
</dbReference>
<dbReference type="GO" id="GO:0005829">
    <property type="term" value="C:cytosol"/>
    <property type="evidence" value="ECO:0000318"/>
    <property type="project" value="GO_Central"/>
</dbReference>
<dbReference type="GO" id="GO:0005524">
    <property type="term" value="F:ATP binding"/>
    <property type="evidence" value="ECO:0007669"/>
    <property type="project" value="UniProtKB-UniRule"/>
</dbReference>
<dbReference type="GO" id="GO:0000287">
    <property type="term" value="F:magnesium ion binding"/>
    <property type="evidence" value="ECO:0007669"/>
    <property type="project" value="UniProtKB-UniRule"/>
</dbReference>
<dbReference type="GO" id="GO:0004478">
    <property type="term" value="F:methionine adenosyltransferase activity"/>
    <property type="evidence" value="ECO:0000318"/>
    <property type="project" value="GO_Central"/>
</dbReference>
<dbReference type="GO" id="GO:0006730">
    <property type="term" value="P:one-carbon metabolic process"/>
    <property type="evidence" value="ECO:0007669"/>
    <property type="project" value="UniProtKB-KW"/>
</dbReference>
<dbReference type="GO" id="GO:0006556">
    <property type="term" value="P:S-adenosylmethionine biosynthetic process"/>
    <property type="evidence" value="ECO:0000318"/>
    <property type="project" value="GO_Central"/>
</dbReference>
<dbReference type="CDD" id="cd18079">
    <property type="entry name" value="S-AdoMet_synt"/>
    <property type="match status" value="1"/>
</dbReference>
<dbReference type="FunFam" id="3.30.300.10:FF:000020">
    <property type="entry name" value="S-adenosylmethionine synthase"/>
    <property type="match status" value="1"/>
</dbReference>
<dbReference type="Gene3D" id="3.30.300.10">
    <property type="match status" value="3"/>
</dbReference>
<dbReference type="HAMAP" id="MF_00086">
    <property type="entry name" value="S_AdoMet_synth1"/>
    <property type="match status" value="1"/>
</dbReference>
<dbReference type="InterPro" id="IPR022631">
    <property type="entry name" value="ADOMET_SYNTHASE_CS"/>
</dbReference>
<dbReference type="InterPro" id="IPR022630">
    <property type="entry name" value="S-AdoMet_synt_C"/>
</dbReference>
<dbReference type="InterPro" id="IPR022629">
    <property type="entry name" value="S-AdoMet_synt_central"/>
</dbReference>
<dbReference type="InterPro" id="IPR022628">
    <property type="entry name" value="S-AdoMet_synt_N"/>
</dbReference>
<dbReference type="InterPro" id="IPR002133">
    <property type="entry name" value="S-AdoMet_synthetase"/>
</dbReference>
<dbReference type="InterPro" id="IPR022636">
    <property type="entry name" value="S-AdoMet_synthetase_sfam"/>
</dbReference>
<dbReference type="NCBIfam" id="TIGR01034">
    <property type="entry name" value="metK"/>
    <property type="match status" value="1"/>
</dbReference>
<dbReference type="PANTHER" id="PTHR11964">
    <property type="entry name" value="S-ADENOSYLMETHIONINE SYNTHETASE"/>
    <property type="match status" value="1"/>
</dbReference>
<dbReference type="Pfam" id="PF02773">
    <property type="entry name" value="S-AdoMet_synt_C"/>
    <property type="match status" value="1"/>
</dbReference>
<dbReference type="Pfam" id="PF02772">
    <property type="entry name" value="S-AdoMet_synt_M"/>
    <property type="match status" value="1"/>
</dbReference>
<dbReference type="Pfam" id="PF00438">
    <property type="entry name" value="S-AdoMet_synt_N"/>
    <property type="match status" value="1"/>
</dbReference>
<dbReference type="PIRSF" id="PIRSF000497">
    <property type="entry name" value="MAT"/>
    <property type="match status" value="1"/>
</dbReference>
<dbReference type="SUPFAM" id="SSF55973">
    <property type="entry name" value="S-adenosylmethionine synthetase"/>
    <property type="match status" value="3"/>
</dbReference>
<dbReference type="PROSITE" id="PS00376">
    <property type="entry name" value="ADOMET_SYNTHASE_1"/>
    <property type="match status" value="1"/>
</dbReference>
<dbReference type="PROSITE" id="PS00377">
    <property type="entry name" value="ADOMET_SYNTHASE_2"/>
    <property type="match status" value="1"/>
</dbReference>
<organism>
    <name type="scientific">Bacteroides thetaiotaomicron (strain ATCC 29148 / DSM 2079 / JCM 5827 / CCUG 10774 / NCTC 10582 / VPI-5482 / E50)</name>
    <dbReference type="NCBI Taxonomy" id="226186"/>
    <lineage>
        <taxon>Bacteria</taxon>
        <taxon>Pseudomonadati</taxon>
        <taxon>Bacteroidota</taxon>
        <taxon>Bacteroidia</taxon>
        <taxon>Bacteroidales</taxon>
        <taxon>Bacteroidaceae</taxon>
        <taxon>Bacteroides</taxon>
    </lineage>
</organism>
<gene>
    <name evidence="1" type="primary">metK</name>
    <name type="ordered locus">BT_3219</name>
</gene>
<reference key="1">
    <citation type="journal article" date="2003" name="Science">
        <title>A genomic view of the human-Bacteroides thetaiotaomicron symbiosis.</title>
        <authorList>
            <person name="Xu J."/>
            <person name="Bjursell M.K."/>
            <person name="Himrod J."/>
            <person name="Deng S."/>
            <person name="Carmichael L.K."/>
            <person name="Chiang H.C."/>
            <person name="Hooper L.V."/>
            <person name="Gordon J.I."/>
        </authorList>
    </citation>
    <scope>NUCLEOTIDE SEQUENCE [LARGE SCALE GENOMIC DNA]</scope>
    <source>
        <strain>ATCC 29148 / DSM 2079 / JCM 5827 / CCUG 10774 / NCTC 10582 / VPI-5482 / E50</strain>
    </source>
</reference>
<keyword id="KW-0067">ATP-binding</keyword>
<keyword id="KW-0963">Cytoplasm</keyword>
<keyword id="KW-0460">Magnesium</keyword>
<keyword id="KW-0479">Metal-binding</keyword>
<keyword id="KW-0547">Nucleotide-binding</keyword>
<keyword id="KW-0554">One-carbon metabolism</keyword>
<keyword id="KW-0630">Potassium</keyword>
<keyword id="KW-1185">Reference proteome</keyword>
<keyword id="KW-0808">Transferase</keyword>
<protein>
    <recommendedName>
        <fullName evidence="1">S-adenosylmethionine synthase</fullName>
        <shortName evidence="1">AdoMet synthase</shortName>
        <ecNumber evidence="1">2.5.1.6</ecNumber>
    </recommendedName>
    <alternativeName>
        <fullName evidence="1">MAT</fullName>
    </alternativeName>
    <alternativeName>
        <fullName evidence="1">Methionine adenosyltransferase</fullName>
    </alternativeName>
</protein>
<name>METK_BACTN</name>
<feature type="chain" id="PRO_0000174493" description="S-adenosylmethionine synthase">
    <location>
        <begin position="1"/>
        <end position="430"/>
    </location>
</feature>
<feature type="region of interest" description="Flexible loop" evidence="1">
    <location>
        <begin position="98"/>
        <end position="108"/>
    </location>
</feature>
<feature type="binding site" description="in other chain" evidence="1">
    <location>
        <position position="14"/>
    </location>
    <ligand>
        <name>ATP</name>
        <dbReference type="ChEBI" id="CHEBI:30616"/>
        <note>ligand shared between two neighboring subunits</note>
    </ligand>
</feature>
<feature type="binding site" evidence="1">
    <location>
        <position position="16"/>
    </location>
    <ligand>
        <name>Mg(2+)</name>
        <dbReference type="ChEBI" id="CHEBI:18420"/>
    </ligand>
</feature>
<feature type="binding site" evidence="1">
    <location>
        <position position="42"/>
    </location>
    <ligand>
        <name>K(+)</name>
        <dbReference type="ChEBI" id="CHEBI:29103"/>
    </ligand>
</feature>
<feature type="binding site" description="in other chain" evidence="1">
    <location>
        <position position="55"/>
    </location>
    <ligand>
        <name>L-methionine</name>
        <dbReference type="ChEBI" id="CHEBI:57844"/>
        <note>ligand shared between two neighboring subunits</note>
    </ligand>
</feature>
<feature type="binding site" description="in other chain" evidence="1">
    <location>
        <position position="98"/>
    </location>
    <ligand>
        <name>L-methionine</name>
        <dbReference type="ChEBI" id="CHEBI:57844"/>
        <note>ligand shared between two neighboring subunits</note>
    </ligand>
</feature>
<feature type="binding site" description="in other chain" evidence="1">
    <location>
        <begin position="164"/>
        <end position="166"/>
    </location>
    <ligand>
        <name>ATP</name>
        <dbReference type="ChEBI" id="CHEBI:30616"/>
        <note>ligand shared between two neighboring subunits</note>
    </ligand>
</feature>
<feature type="binding site" description="in other chain" evidence="1">
    <location>
        <begin position="254"/>
        <end position="255"/>
    </location>
    <ligand>
        <name>ATP</name>
        <dbReference type="ChEBI" id="CHEBI:30616"/>
        <note>ligand shared between two neighboring subunits</note>
    </ligand>
</feature>
<feature type="binding site" evidence="1">
    <location>
        <position position="263"/>
    </location>
    <ligand>
        <name>ATP</name>
        <dbReference type="ChEBI" id="CHEBI:30616"/>
        <note>ligand shared between two neighboring subunits</note>
    </ligand>
</feature>
<feature type="binding site" evidence="1">
    <location>
        <position position="263"/>
    </location>
    <ligand>
        <name>L-methionine</name>
        <dbReference type="ChEBI" id="CHEBI:57844"/>
        <note>ligand shared between two neighboring subunits</note>
    </ligand>
</feature>
<feature type="binding site" description="in other chain" evidence="1">
    <location>
        <begin position="269"/>
        <end position="270"/>
    </location>
    <ligand>
        <name>ATP</name>
        <dbReference type="ChEBI" id="CHEBI:30616"/>
        <note>ligand shared between two neighboring subunits</note>
    </ligand>
</feature>
<feature type="binding site" evidence="1">
    <location>
        <position position="286"/>
    </location>
    <ligand>
        <name>ATP</name>
        <dbReference type="ChEBI" id="CHEBI:30616"/>
        <note>ligand shared between two neighboring subunits</note>
    </ligand>
</feature>
<feature type="binding site" evidence="1">
    <location>
        <position position="290"/>
    </location>
    <ligand>
        <name>ATP</name>
        <dbReference type="ChEBI" id="CHEBI:30616"/>
        <note>ligand shared between two neighboring subunits</note>
    </ligand>
</feature>
<feature type="binding site" description="in other chain" evidence="1">
    <location>
        <position position="294"/>
    </location>
    <ligand>
        <name>L-methionine</name>
        <dbReference type="ChEBI" id="CHEBI:57844"/>
        <note>ligand shared between two neighboring subunits</note>
    </ligand>
</feature>
<evidence type="ECO:0000255" key="1">
    <source>
        <dbReference type="HAMAP-Rule" id="MF_00086"/>
    </source>
</evidence>
<comment type="function">
    <text evidence="1">Catalyzes the formation of S-adenosylmethionine (AdoMet) from methionine and ATP. The overall synthetic reaction is composed of two sequential steps, AdoMet formation and the subsequent tripolyphosphate hydrolysis which occurs prior to release of AdoMet from the enzyme.</text>
</comment>
<comment type="catalytic activity">
    <reaction evidence="1">
        <text>L-methionine + ATP + H2O = S-adenosyl-L-methionine + phosphate + diphosphate</text>
        <dbReference type="Rhea" id="RHEA:21080"/>
        <dbReference type="ChEBI" id="CHEBI:15377"/>
        <dbReference type="ChEBI" id="CHEBI:30616"/>
        <dbReference type="ChEBI" id="CHEBI:33019"/>
        <dbReference type="ChEBI" id="CHEBI:43474"/>
        <dbReference type="ChEBI" id="CHEBI:57844"/>
        <dbReference type="ChEBI" id="CHEBI:59789"/>
        <dbReference type="EC" id="2.5.1.6"/>
    </reaction>
</comment>
<comment type="cofactor">
    <cofactor evidence="1">
        <name>Mg(2+)</name>
        <dbReference type="ChEBI" id="CHEBI:18420"/>
    </cofactor>
    <text evidence="1">Binds 2 divalent ions per subunit.</text>
</comment>
<comment type="cofactor">
    <cofactor evidence="1">
        <name>K(+)</name>
        <dbReference type="ChEBI" id="CHEBI:29103"/>
    </cofactor>
    <text evidence="1">Binds 1 potassium ion per subunit.</text>
</comment>
<comment type="pathway">
    <text evidence="1">Amino-acid biosynthesis; S-adenosyl-L-methionine biosynthesis; S-adenosyl-L-methionine from L-methionine: step 1/1.</text>
</comment>
<comment type="subunit">
    <text evidence="1">Homotetramer; dimer of dimers.</text>
</comment>
<comment type="subcellular location">
    <subcellularLocation>
        <location evidence="1">Cytoplasm</location>
    </subcellularLocation>
</comment>
<comment type="similarity">
    <text evidence="1">Belongs to the AdoMet synthase family.</text>
</comment>